<gene>
    <name evidence="1" type="primary">tsaD</name>
    <name type="synonym">gcp</name>
    <name type="ordered locus">trd_0177</name>
</gene>
<feature type="chain" id="PRO_1000184989" description="tRNA N6-adenosine threonylcarbamoyltransferase">
    <location>
        <begin position="1"/>
        <end position="365"/>
    </location>
</feature>
<feature type="binding site" evidence="1">
    <location>
        <position position="111"/>
    </location>
    <ligand>
        <name>Fe cation</name>
        <dbReference type="ChEBI" id="CHEBI:24875"/>
    </ligand>
</feature>
<feature type="binding site" evidence="1">
    <location>
        <position position="115"/>
    </location>
    <ligand>
        <name>Fe cation</name>
        <dbReference type="ChEBI" id="CHEBI:24875"/>
    </ligand>
</feature>
<feature type="binding site" evidence="1">
    <location>
        <begin position="140"/>
        <end position="144"/>
    </location>
    <ligand>
        <name>substrate</name>
    </ligand>
</feature>
<feature type="binding site" evidence="1">
    <location>
        <position position="173"/>
    </location>
    <ligand>
        <name>substrate</name>
    </ligand>
</feature>
<feature type="binding site" evidence="1">
    <location>
        <position position="186"/>
    </location>
    <ligand>
        <name>substrate</name>
    </ligand>
</feature>
<feature type="binding site" evidence="1">
    <location>
        <position position="298"/>
    </location>
    <ligand>
        <name>substrate</name>
    </ligand>
</feature>
<feature type="binding site" evidence="1">
    <location>
        <position position="323"/>
    </location>
    <ligand>
        <name>Fe cation</name>
        <dbReference type="ChEBI" id="CHEBI:24875"/>
    </ligand>
</feature>
<organism>
    <name type="scientific">Thermomicrobium roseum (strain ATCC 27502 / DSM 5159 / P-2)</name>
    <dbReference type="NCBI Taxonomy" id="309801"/>
    <lineage>
        <taxon>Bacteria</taxon>
        <taxon>Pseudomonadati</taxon>
        <taxon>Thermomicrobiota</taxon>
        <taxon>Thermomicrobia</taxon>
        <taxon>Thermomicrobiales</taxon>
        <taxon>Thermomicrobiaceae</taxon>
        <taxon>Thermomicrobium</taxon>
    </lineage>
</organism>
<dbReference type="EC" id="2.3.1.234" evidence="1"/>
<dbReference type="EMBL" id="CP001275">
    <property type="protein sequence ID" value="ACM06291.1"/>
    <property type="molecule type" value="Genomic_DNA"/>
</dbReference>
<dbReference type="RefSeq" id="WP_012641590.1">
    <property type="nucleotide sequence ID" value="NC_011959.1"/>
</dbReference>
<dbReference type="SMR" id="B9KXJ0"/>
<dbReference type="STRING" id="309801.trd_0177"/>
<dbReference type="KEGG" id="tro:trd_0177"/>
<dbReference type="eggNOG" id="COG0533">
    <property type="taxonomic scope" value="Bacteria"/>
</dbReference>
<dbReference type="HOGENOM" id="CLU_023208_0_2_0"/>
<dbReference type="OrthoDB" id="9806197at2"/>
<dbReference type="Proteomes" id="UP000000447">
    <property type="component" value="Chromosome"/>
</dbReference>
<dbReference type="GO" id="GO:0005737">
    <property type="term" value="C:cytoplasm"/>
    <property type="evidence" value="ECO:0007669"/>
    <property type="project" value="UniProtKB-SubCell"/>
</dbReference>
<dbReference type="GO" id="GO:0005506">
    <property type="term" value="F:iron ion binding"/>
    <property type="evidence" value="ECO:0007669"/>
    <property type="project" value="UniProtKB-UniRule"/>
</dbReference>
<dbReference type="GO" id="GO:0061711">
    <property type="term" value="F:N(6)-L-threonylcarbamoyladenine synthase activity"/>
    <property type="evidence" value="ECO:0007669"/>
    <property type="project" value="UniProtKB-EC"/>
</dbReference>
<dbReference type="GO" id="GO:0002949">
    <property type="term" value="P:tRNA threonylcarbamoyladenosine modification"/>
    <property type="evidence" value="ECO:0007669"/>
    <property type="project" value="UniProtKB-UniRule"/>
</dbReference>
<dbReference type="CDD" id="cd24133">
    <property type="entry name" value="ASKHA_NBD_TsaD_bac"/>
    <property type="match status" value="1"/>
</dbReference>
<dbReference type="FunFam" id="3.30.420.40:FF:000012">
    <property type="entry name" value="tRNA N6-adenosine threonylcarbamoyltransferase"/>
    <property type="match status" value="1"/>
</dbReference>
<dbReference type="FunFam" id="3.30.420.40:FF:000040">
    <property type="entry name" value="tRNA N6-adenosine threonylcarbamoyltransferase"/>
    <property type="match status" value="1"/>
</dbReference>
<dbReference type="Gene3D" id="3.30.420.40">
    <property type="match status" value="2"/>
</dbReference>
<dbReference type="HAMAP" id="MF_01445">
    <property type="entry name" value="TsaD"/>
    <property type="match status" value="1"/>
</dbReference>
<dbReference type="InterPro" id="IPR043129">
    <property type="entry name" value="ATPase_NBD"/>
</dbReference>
<dbReference type="InterPro" id="IPR000905">
    <property type="entry name" value="Gcp-like_dom"/>
</dbReference>
<dbReference type="InterPro" id="IPR017861">
    <property type="entry name" value="KAE1/TsaD"/>
</dbReference>
<dbReference type="InterPro" id="IPR022450">
    <property type="entry name" value="TsaD"/>
</dbReference>
<dbReference type="NCBIfam" id="TIGR00329">
    <property type="entry name" value="gcp_kae1"/>
    <property type="match status" value="1"/>
</dbReference>
<dbReference type="NCBIfam" id="TIGR03723">
    <property type="entry name" value="T6A_TsaD_YgjD"/>
    <property type="match status" value="1"/>
</dbReference>
<dbReference type="PANTHER" id="PTHR11735">
    <property type="entry name" value="TRNA N6-ADENOSINE THREONYLCARBAMOYLTRANSFERASE"/>
    <property type="match status" value="1"/>
</dbReference>
<dbReference type="PANTHER" id="PTHR11735:SF6">
    <property type="entry name" value="TRNA N6-ADENOSINE THREONYLCARBAMOYLTRANSFERASE, MITOCHONDRIAL"/>
    <property type="match status" value="1"/>
</dbReference>
<dbReference type="Pfam" id="PF00814">
    <property type="entry name" value="TsaD"/>
    <property type="match status" value="1"/>
</dbReference>
<dbReference type="PRINTS" id="PR00789">
    <property type="entry name" value="OSIALOPTASE"/>
</dbReference>
<dbReference type="SUPFAM" id="SSF53067">
    <property type="entry name" value="Actin-like ATPase domain"/>
    <property type="match status" value="1"/>
</dbReference>
<sequence>MIILGIETSCDETAAAVVRDGRFVLSNIIRSQVDLHQRYGGVVPELASRRHVTSIVPVLDLALEQAGIGPSAIDAIAVTEGPGLAGSLLVGINVAKTLAFVWEKPLIPVNHLEGHIYANWLTLPGQDEVPEPTFPLVCLIVSGGHTELVLMRGHGDYVLLGRTLDDAAGEAFDKAARLLGLGFPGGPAIQKAAEQGRPGRFSLPRAWLGESYDFSFSGLKTALLRVLEQYQRRPARRVAAGQPFPEYVAPEYGPSVPIADLAAEFQAAVVEVLAEKTARAAREFGATMVLLAGGVAANAALRQRLREISPVPVRYPPPILCTDNAAMIAGAAYYLAQRGVRADLDLDVHAHLPLVTRTLLRAGEA</sequence>
<evidence type="ECO:0000255" key="1">
    <source>
        <dbReference type="HAMAP-Rule" id="MF_01445"/>
    </source>
</evidence>
<name>TSAD_THERP</name>
<protein>
    <recommendedName>
        <fullName evidence="1">tRNA N6-adenosine threonylcarbamoyltransferase</fullName>
        <ecNumber evidence="1">2.3.1.234</ecNumber>
    </recommendedName>
    <alternativeName>
        <fullName evidence="1">N6-L-threonylcarbamoyladenine synthase</fullName>
        <shortName evidence="1">t(6)A synthase</shortName>
    </alternativeName>
    <alternativeName>
        <fullName evidence="1">t(6)A37 threonylcarbamoyladenosine biosynthesis protein TsaD</fullName>
    </alternativeName>
    <alternativeName>
        <fullName evidence="1">tRNA threonylcarbamoyladenosine biosynthesis protein TsaD</fullName>
    </alternativeName>
</protein>
<comment type="function">
    <text evidence="1">Required for the formation of a threonylcarbamoyl group on adenosine at position 37 (t(6)A37) in tRNAs that read codons beginning with adenine. Is involved in the transfer of the threonylcarbamoyl moiety of threonylcarbamoyl-AMP (TC-AMP) to the N6 group of A37, together with TsaE and TsaB. TsaD likely plays a direct catalytic role in this reaction.</text>
</comment>
<comment type="catalytic activity">
    <reaction evidence="1">
        <text>L-threonylcarbamoyladenylate + adenosine(37) in tRNA = N(6)-L-threonylcarbamoyladenosine(37) in tRNA + AMP + H(+)</text>
        <dbReference type="Rhea" id="RHEA:37059"/>
        <dbReference type="Rhea" id="RHEA-COMP:10162"/>
        <dbReference type="Rhea" id="RHEA-COMP:10163"/>
        <dbReference type="ChEBI" id="CHEBI:15378"/>
        <dbReference type="ChEBI" id="CHEBI:73682"/>
        <dbReference type="ChEBI" id="CHEBI:74411"/>
        <dbReference type="ChEBI" id="CHEBI:74418"/>
        <dbReference type="ChEBI" id="CHEBI:456215"/>
        <dbReference type="EC" id="2.3.1.234"/>
    </reaction>
</comment>
<comment type="cofactor">
    <cofactor evidence="1">
        <name>Fe(2+)</name>
        <dbReference type="ChEBI" id="CHEBI:29033"/>
    </cofactor>
    <text evidence="1">Binds 1 Fe(2+) ion per subunit.</text>
</comment>
<comment type="subcellular location">
    <subcellularLocation>
        <location evidence="1">Cytoplasm</location>
    </subcellularLocation>
</comment>
<comment type="similarity">
    <text evidence="1">Belongs to the KAE1 / TsaD family.</text>
</comment>
<keyword id="KW-0012">Acyltransferase</keyword>
<keyword id="KW-0963">Cytoplasm</keyword>
<keyword id="KW-0408">Iron</keyword>
<keyword id="KW-0479">Metal-binding</keyword>
<keyword id="KW-1185">Reference proteome</keyword>
<keyword id="KW-0808">Transferase</keyword>
<keyword id="KW-0819">tRNA processing</keyword>
<accession>B9KXJ0</accession>
<reference key="1">
    <citation type="journal article" date="2009" name="PLoS ONE">
        <title>Complete genome sequence of the aerobic CO-oxidizing thermophile Thermomicrobium roseum.</title>
        <authorList>
            <person name="Wu D."/>
            <person name="Raymond J."/>
            <person name="Wu M."/>
            <person name="Chatterji S."/>
            <person name="Ren Q."/>
            <person name="Graham J.E."/>
            <person name="Bryant D.A."/>
            <person name="Robb F."/>
            <person name="Colman A."/>
            <person name="Tallon L.J."/>
            <person name="Badger J.H."/>
            <person name="Madupu R."/>
            <person name="Ward N.L."/>
            <person name="Eisen J.A."/>
        </authorList>
    </citation>
    <scope>NUCLEOTIDE SEQUENCE [LARGE SCALE GENOMIC DNA]</scope>
    <source>
        <strain>ATCC 27502 / DSM 5159 / P-2</strain>
    </source>
</reference>
<proteinExistence type="inferred from homology"/>